<keyword id="KW-0963">Cytoplasm</keyword>
<keyword id="KW-0448">Lipopolysaccharide biosynthesis</keyword>
<keyword id="KW-0548">Nucleotidyltransferase</keyword>
<keyword id="KW-1185">Reference proteome</keyword>
<keyword id="KW-0808">Transferase</keyword>
<gene>
    <name evidence="1" type="primary">kdsB</name>
    <name type="ordered locus">XOO2295</name>
</gene>
<sequence length="259" mass="27858">MTLPPPADFVVAIPARYASKRLPGKPLQRIGNRPMIQHVAERALLAGARAVWVATDDARIAEAIAHLPGVHVAMTGTAHLSGTDRLAECARIAGWDEQTCVVNLQGDEPFAPAAGIGAVADLLQHSGAEMATLAAPVDSAHDLFDPNVVKLVRNARGDALYFSRAPIPWHRDSFASQRDSVPAEGQWLRHIGIYGYRAGFLQRFAAMPPGMLERIESLEQLRVMEAGYRIAVAVTPEPFPPGIDTPDDLARAQARVASA</sequence>
<comment type="function">
    <text evidence="1">Activates KDO (a required 8-carbon sugar) for incorporation into bacterial lipopolysaccharide in Gram-negative bacteria.</text>
</comment>
<comment type="catalytic activity">
    <reaction evidence="1">
        <text>3-deoxy-alpha-D-manno-oct-2-ulosonate + CTP = CMP-3-deoxy-beta-D-manno-octulosonate + diphosphate</text>
        <dbReference type="Rhea" id="RHEA:23448"/>
        <dbReference type="ChEBI" id="CHEBI:33019"/>
        <dbReference type="ChEBI" id="CHEBI:37563"/>
        <dbReference type="ChEBI" id="CHEBI:85986"/>
        <dbReference type="ChEBI" id="CHEBI:85987"/>
        <dbReference type="EC" id="2.7.7.38"/>
    </reaction>
</comment>
<comment type="pathway">
    <text evidence="1">Nucleotide-sugar biosynthesis; CMP-3-deoxy-D-manno-octulosonate biosynthesis; CMP-3-deoxy-D-manno-octulosonate from 3-deoxy-D-manno-octulosonate and CTP: step 1/1.</text>
</comment>
<comment type="pathway">
    <text evidence="1">Bacterial outer membrane biogenesis; lipopolysaccharide biosynthesis.</text>
</comment>
<comment type="subcellular location">
    <subcellularLocation>
        <location evidence="1">Cytoplasm</location>
    </subcellularLocation>
</comment>
<comment type="similarity">
    <text evidence="1">Belongs to the KdsB family.</text>
</comment>
<protein>
    <recommendedName>
        <fullName evidence="1">3-deoxy-manno-octulosonate cytidylyltransferase</fullName>
        <ecNumber evidence="1">2.7.7.38</ecNumber>
    </recommendedName>
    <alternativeName>
        <fullName evidence="1">CMP-2-keto-3-deoxyoctulosonic acid synthase</fullName>
        <shortName evidence="1">CKS</shortName>
        <shortName evidence="1">CMP-KDO synthase</shortName>
    </alternativeName>
</protein>
<reference key="1">
    <citation type="journal article" date="2005" name="Nucleic Acids Res.">
        <title>The genome sequence of Xanthomonas oryzae pathovar oryzae KACC10331, the bacterial blight pathogen of rice.</title>
        <authorList>
            <person name="Lee B.-M."/>
            <person name="Park Y.-J."/>
            <person name="Park D.-S."/>
            <person name="Kang H.-W."/>
            <person name="Kim J.-G."/>
            <person name="Song E.-S."/>
            <person name="Park I.-C."/>
            <person name="Yoon U.-H."/>
            <person name="Hahn J.-H."/>
            <person name="Koo B.-S."/>
            <person name="Lee G.-B."/>
            <person name="Kim H."/>
            <person name="Park H.-S."/>
            <person name="Yoon K.-O."/>
            <person name="Kim J.-H."/>
            <person name="Jung C.-H."/>
            <person name="Koh N.-H."/>
            <person name="Seo J.-S."/>
            <person name="Go S.-J."/>
        </authorList>
    </citation>
    <scope>NUCLEOTIDE SEQUENCE [LARGE SCALE GENOMIC DNA]</scope>
    <source>
        <strain>KACC10331 / KXO85</strain>
    </source>
</reference>
<dbReference type="EC" id="2.7.7.38" evidence="1"/>
<dbReference type="EMBL" id="AE013598">
    <property type="protein sequence ID" value="AAW75549.1"/>
    <property type="molecule type" value="Genomic_DNA"/>
</dbReference>
<dbReference type="SMR" id="Q5H0H2"/>
<dbReference type="STRING" id="291331.XOO2295"/>
<dbReference type="KEGG" id="xoo:XOO2295"/>
<dbReference type="HOGENOM" id="CLU_065038_1_0_6"/>
<dbReference type="UniPathway" id="UPA00030"/>
<dbReference type="UniPathway" id="UPA00358">
    <property type="reaction ID" value="UER00476"/>
</dbReference>
<dbReference type="Proteomes" id="UP000006735">
    <property type="component" value="Chromosome"/>
</dbReference>
<dbReference type="GO" id="GO:0005829">
    <property type="term" value="C:cytosol"/>
    <property type="evidence" value="ECO:0007669"/>
    <property type="project" value="TreeGrafter"/>
</dbReference>
<dbReference type="GO" id="GO:0008690">
    <property type="term" value="F:3-deoxy-manno-octulosonate cytidylyltransferase activity"/>
    <property type="evidence" value="ECO:0007669"/>
    <property type="project" value="UniProtKB-UniRule"/>
</dbReference>
<dbReference type="GO" id="GO:0033468">
    <property type="term" value="P:CMP-keto-3-deoxy-D-manno-octulosonic acid biosynthetic process"/>
    <property type="evidence" value="ECO:0007669"/>
    <property type="project" value="UniProtKB-UniRule"/>
</dbReference>
<dbReference type="GO" id="GO:0009103">
    <property type="term" value="P:lipopolysaccharide biosynthetic process"/>
    <property type="evidence" value="ECO:0007669"/>
    <property type="project" value="UniProtKB-UniRule"/>
</dbReference>
<dbReference type="CDD" id="cd02517">
    <property type="entry name" value="CMP-KDO-Synthetase"/>
    <property type="match status" value="1"/>
</dbReference>
<dbReference type="FunFam" id="3.90.550.10:FF:000011">
    <property type="entry name" value="3-deoxy-manno-octulosonate cytidylyltransferase"/>
    <property type="match status" value="1"/>
</dbReference>
<dbReference type="Gene3D" id="3.90.550.10">
    <property type="entry name" value="Spore Coat Polysaccharide Biosynthesis Protein SpsA, Chain A"/>
    <property type="match status" value="1"/>
</dbReference>
<dbReference type="HAMAP" id="MF_00057">
    <property type="entry name" value="KdsB"/>
    <property type="match status" value="1"/>
</dbReference>
<dbReference type="InterPro" id="IPR003329">
    <property type="entry name" value="Cytidylyl_trans"/>
</dbReference>
<dbReference type="InterPro" id="IPR004528">
    <property type="entry name" value="KdsB"/>
</dbReference>
<dbReference type="InterPro" id="IPR029044">
    <property type="entry name" value="Nucleotide-diphossugar_trans"/>
</dbReference>
<dbReference type="NCBIfam" id="TIGR00466">
    <property type="entry name" value="kdsB"/>
    <property type="match status" value="1"/>
</dbReference>
<dbReference type="NCBIfam" id="NF003952">
    <property type="entry name" value="PRK05450.1-5"/>
    <property type="match status" value="1"/>
</dbReference>
<dbReference type="PANTHER" id="PTHR42866">
    <property type="entry name" value="3-DEOXY-MANNO-OCTULOSONATE CYTIDYLYLTRANSFERASE"/>
    <property type="match status" value="1"/>
</dbReference>
<dbReference type="PANTHER" id="PTHR42866:SF2">
    <property type="entry name" value="3-DEOXY-MANNO-OCTULOSONATE CYTIDYLYLTRANSFERASE, MITOCHONDRIAL"/>
    <property type="match status" value="1"/>
</dbReference>
<dbReference type="Pfam" id="PF02348">
    <property type="entry name" value="CTP_transf_3"/>
    <property type="match status" value="1"/>
</dbReference>
<dbReference type="SUPFAM" id="SSF53448">
    <property type="entry name" value="Nucleotide-diphospho-sugar transferases"/>
    <property type="match status" value="1"/>
</dbReference>
<feature type="chain" id="PRO_0000370174" description="3-deoxy-manno-octulosonate cytidylyltransferase">
    <location>
        <begin position="1"/>
        <end position="259"/>
    </location>
</feature>
<name>KDSB_XANOR</name>
<evidence type="ECO:0000255" key="1">
    <source>
        <dbReference type="HAMAP-Rule" id="MF_00057"/>
    </source>
</evidence>
<organism>
    <name type="scientific">Xanthomonas oryzae pv. oryzae (strain KACC10331 / KXO85)</name>
    <dbReference type="NCBI Taxonomy" id="291331"/>
    <lineage>
        <taxon>Bacteria</taxon>
        <taxon>Pseudomonadati</taxon>
        <taxon>Pseudomonadota</taxon>
        <taxon>Gammaproteobacteria</taxon>
        <taxon>Lysobacterales</taxon>
        <taxon>Lysobacteraceae</taxon>
        <taxon>Xanthomonas</taxon>
    </lineage>
</organism>
<accession>Q5H0H2</accession>
<proteinExistence type="inferred from homology"/>